<name>GCST_SODGM</name>
<reference key="1">
    <citation type="journal article" date="2006" name="Genome Res.">
        <title>Massive genome erosion and functional adaptations provide insights into the symbiotic lifestyle of Sodalis glossinidius in the tsetse host.</title>
        <authorList>
            <person name="Toh H."/>
            <person name="Weiss B.L."/>
            <person name="Perkin S.A.H."/>
            <person name="Yamashita A."/>
            <person name="Oshima K."/>
            <person name="Hattori M."/>
            <person name="Aksoy S."/>
        </authorList>
    </citation>
    <scope>NUCLEOTIDE SEQUENCE [LARGE SCALE GENOMIC DNA]</scope>
    <source>
        <strain>morsitans</strain>
    </source>
</reference>
<gene>
    <name evidence="1" type="primary">gcvT</name>
    <name type="ordered locus">SG2002</name>
</gene>
<organism>
    <name type="scientific">Sodalis glossinidius (strain morsitans)</name>
    <dbReference type="NCBI Taxonomy" id="343509"/>
    <lineage>
        <taxon>Bacteria</taxon>
        <taxon>Pseudomonadati</taxon>
        <taxon>Pseudomonadota</taxon>
        <taxon>Gammaproteobacteria</taxon>
        <taxon>Enterobacterales</taxon>
        <taxon>Bruguierivoracaceae</taxon>
        <taxon>Sodalis</taxon>
    </lineage>
</organism>
<feature type="chain" id="PRO_1000047712" description="Aminomethyltransferase">
    <location>
        <begin position="1"/>
        <end position="366"/>
    </location>
</feature>
<sequence length="366" mass="39916">MAQQTPLYEEHHASGAKMVDFHGWMMPLHYGSQLDEHHQVRRDVGMFDVSHMTIVDLAGPRTRDFLRHLLANDVAKLTVPGKALYTGMLNASGGVIDDLIVYFLSEIEFRLVVNSETRDKDVEWITRHAEPYQVTVTVRDDLALIAVQGPQAQSKTQTLFSSQQRQAVSGMKPFFGVQANELFIATTGYTGEAGYEIALPATQAADFWRQLLAAGVKPCGLGARDTLRLEAGMNLYGQEMDEGISPLAANMGWTITWRPEGRDFIGREALEAQRAAGDGEQLVGLVMTEKGVLRNGLPVHFTDAAGNMQQGIITSGSFSPTLGVSIALARVPAGIGQQAIVLIRNREMPVKVTKPGFVRAGKAVAQ</sequence>
<protein>
    <recommendedName>
        <fullName evidence="1">Aminomethyltransferase</fullName>
        <ecNumber evidence="1">2.1.2.10</ecNumber>
    </recommendedName>
    <alternativeName>
        <fullName evidence="1">Glycine cleavage system T protein</fullName>
    </alternativeName>
</protein>
<keyword id="KW-0032">Aminotransferase</keyword>
<keyword id="KW-0808">Transferase</keyword>
<proteinExistence type="inferred from homology"/>
<comment type="function">
    <text evidence="1">The glycine cleavage system catalyzes the degradation of glycine.</text>
</comment>
<comment type="catalytic activity">
    <reaction evidence="1">
        <text>N(6)-[(R)-S(8)-aminomethyldihydrolipoyl]-L-lysyl-[protein] + (6S)-5,6,7,8-tetrahydrofolate = N(6)-[(R)-dihydrolipoyl]-L-lysyl-[protein] + (6R)-5,10-methylene-5,6,7,8-tetrahydrofolate + NH4(+)</text>
        <dbReference type="Rhea" id="RHEA:16945"/>
        <dbReference type="Rhea" id="RHEA-COMP:10475"/>
        <dbReference type="Rhea" id="RHEA-COMP:10492"/>
        <dbReference type="ChEBI" id="CHEBI:15636"/>
        <dbReference type="ChEBI" id="CHEBI:28938"/>
        <dbReference type="ChEBI" id="CHEBI:57453"/>
        <dbReference type="ChEBI" id="CHEBI:83100"/>
        <dbReference type="ChEBI" id="CHEBI:83143"/>
        <dbReference type="EC" id="2.1.2.10"/>
    </reaction>
</comment>
<comment type="subunit">
    <text evidence="1">The glycine cleavage system is composed of four proteins: P, T, L and H.</text>
</comment>
<comment type="similarity">
    <text evidence="1">Belongs to the GcvT family.</text>
</comment>
<dbReference type="EC" id="2.1.2.10" evidence="1"/>
<dbReference type="EMBL" id="AP008232">
    <property type="protein sequence ID" value="BAE75277.1"/>
    <property type="molecule type" value="Genomic_DNA"/>
</dbReference>
<dbReference type="RefSeq" id="WP_011411732.1">
    <property type="nucleotide sequence ID" value="NC_007712.1"/>
</dbReference>
<dbReference type="SMR" id="Q2NRE8"/>
<dbReference type="STRING" id="343509.SG2002"/>
<dbReference type="KEGG" id="sgl:SG2002"/>
<dbReference type="eggNOG" id="COG0404">
    <property type="taxonomic scope" value="Bacteria"/>
</dbReference>
<dbReference type="HOGENOM" id="CLU_007884_10_2_6"/>
<dbReference type="OrthoDB" id="9774591at2"/>
<dbReference type="BioCyc" id="SGLO343509:SGP1_RS18370-MONOMER"/>
<dbReference type="Proteomes" id="UP000001932">
    <property type="component" value="Chromosome"/>
</dbReference>
<dbReference type="GO" id="GO:0005829">
    <property type="term" value="C:cytosol"/>
    <property type="evidence" value="ECO:0007669"/>
    <property type="project" value="TreeGrafter"/>
</dbReference>
<dbReference type="GO" id="GO:0005960">
    <property type="term" value="C:glycine cleavage complex"/>
    <property type="evidence" value="ECO:0007669"/>
    <property type="project" value="InterPro"/>
</dbReference>
<dbReference type="GO" id="GO:0004047">
    <property type="term" value="F:aminomethyltransferase activity"/>
    <property type="evidence" value="ECO:0007669"/>
    <property type="project" value="UniProtKB-UniRule"/>
</dbReference>
<dbReference type="GO" id="GO:0008483">
    <property type="term" value="F:transaminase activity"/>
    <property type="evidence" value="ECO:0007669"/>
    <property type="project" value="UniProtKB-KW"/>
</dbReference>
<dbReference type="GO" id="GO:0019464">
    <property type="term" value="P:glycine decarboxylation via glycine cleavage system"/>
    <property type="evidence" value="ECO:0007669"/>
    <property type="project" value="UniProtKB-UniRule"/>
</dbReference>
<dbReference type="FunFam" id="2.40.30.110:FF:000001">
    <property type="entry name" value="Aminomethyltransferase"/>
    <property type="match status" value="1"/>
</dbReference>
<dbReference type="FunFam" id="3.30.70.1400:FF:000001">
    <property type="entry name" value="Aminomethyltransferase"/>
    <property type="match status" value="1"/>
</dbReference>
<dbReference type="FunFam" id="4.10.1250.10:FF:000001">
    <property type="entry name" value="Aminomethyltransferase"/>
    <property type="match status" value="1"/>
</dbReference>
<dbReference type="Gene3D" id="2.40.30.110">
    <property type="entry name" value="Aminomethyltransferase beta-barrel domains"/>
    <property type="match status" value="1"/>
</dbReference>
<dbReference type="Gene3D" id="3.30.70.1400">
    <property type="entry name" value="Aminomethyltransferase beta-barrel domains"/>
    <property type="match status" value="1"/>
</dbReference>
<dbReference type="Gene3D" id="4.10.1250.10">
    <property type="entry name" value="Aminomethyltransferase fragment"/>
    <property type="match status" value="1"/>
</dbReference>
<dbReference type="Gene3D" id="3.30.1360.120">
    <property type="entry name" value="Probable tRNA modification gtpase trme, domain 1"/>
    <property type="match status" value="1"/>
</dbReference>
<dbReference type="HAMAP" id="MF_00259">
    <property type="entry name" value="GcvT"/>
    <property type="match status" value="1"/>
</dbReference>
<dbReference type="InterPro" id="IPR006223">
    <property type="entry name" value="GCS_T"/>
</dbReference>
<dbReference type="InterPro" id="IPR022903">
    <property type="entry name" value="GCS_T_bac"/>
</dbReference>
<dbReference type="InterPro" id="IPR013977">
    <property type="entry name" value="GCST_C"/>
</dbReference>
<dbReference type="InterPro" id="IPR006222">
    <property type="entry name" value="GCV_T_N"/>
</dbReference>
<dbReference type="InterPro" id="IPR028896">
    <property type="entry name" value="GcvT/YgfZ/DmdA"/>
</dbReference>
<dbReference type="InterPro" id="IPR029043">
    <property type="entry name" value="GcvT/YgfZ_C"/>
</dbReference>
<dbReference type="InterPro" id="IPR027266">
    <property type="entry name" value="TrmE/GcvT_dom1"/>
</dbReference>
<dbReference type="NCBIfam" id="TIGR00528">
    <property type="entry name" value="gcvT"/>
    <property type="match status" value="1"/>
</dbReference>
<dbReference type="NCBIfam" id="NF001567">
    <property type="entry name" value="PRK00389.1"/>
    <property type="match status" value="1"/>
</dbReference>
<dbReference type="PANTHER" id="PTHR43757">
    <property type="entry name" value="AMINOMETHYLTRANSFERASE"/>
    <property type="match status" value="1"/>
</dbReference>
<dbReference type="PANTHER" id="PTHR43757:SF2">
    <property type="entry name" value="AMINOMETHYLTRANSFERASE, MITOCHONDRIAL"/>
    <property type="match status" value="1"/>
</dbReference>
<dbReference type="Pfam" id="PF01571">
    <property type="entry name" value="GCV_T"/>
    <property type="match status" value="1"/>
</dbReference>
<dbReference type="Pfam" id="PF08669">
    <property type="entry name" value="GCV_T_C"/>
    <property type="match status" value="1"/>
</dbReference>
<dbReference type="PIRSF" id="PIRSF006487">
    <property type="entry name" value="GcvT"/>
    <property type="match status" value="1"/>
</dbReference>
<dbReference type="SUPFAM" id="SSF101790">
    <property type="entry name" value="Aminomethyltransferase beta-barrel domain"/>
    <property type="match status" value="1"/>
</dbReference>
<dbReference type="SUPFAM" id="SSF103025">
    <property type="entry name" value="Folate-binding domain"/>
    <property type="match status" value="1"/>
</dbReference>
<evidence type="ECO:0000255" key="1">
    <source>
        <dbReference type="HAMAP-Rule" id="MF_00259"/>
    </source>
</evidence>
<accession>Q2NRE8</accession>